<gene>
    <name type="primary">PA</name>
</gene>
<dbReference type="EMBL" id="M26079">
    <property type="status" value="NOT_ANNOTATED_CDS"/>
    <property type="molecule type" value="Genomic_RNA"/>
</dbReference>
<dbReference type="RefSeq" id="YP_006495803.1">
    <molecule id="P0DJS3-1"/>
    <property type="nucleotide sequence ID" value="NC_007376.1"/>
</dbReference>
<dbReference type="SMR" id="P0DJS3"/>
<dbReference type="KEGG" id="vg:13229461"/>
<dbReference type="OrthoDB" id="495at10239"/>
<dbReference type="Proteomes" id="UP000200640">
    <property type="component" value="Genome"/>
</dbReference>
<dbReference type="GO" id="GO:0003723">
    <property type="term" value="F:RNA binding"/>
    <property type="evidence" value="ECO:0007669"/>
    <property type="project" value="InterPro"/>
</dbReference>
<dbReference type="GO" id="GO:0039694">
    <property type="term" value="P:viral RNA genome replication"/>
    <property type="evidence" value="ECO:0007669"/>
    <property type="project" value="InterPro"/>
</dbReference>
<dbReference type="GO" id="GO:0075523">
    <property type="term" value="P:viral translational frameshifting"/>
    <property type="evidence" value="ECO:0007669"/>
    <property type="project" value="UniProtKB-KW"/>
</dbReference>
<dbReference type="FunFam" id="3.40.91.90:FF:000001">
    <property type="entry name" value="Polymerase acidic protein"/>
    <property type="match status" value="1"/>
</dbReference>
<dbReference type="Gene3D" id="3.40.91.90">
    <property type="entry name" value="Influenza RNA-dependent RNA polymerase subunit PA, endonuclease domain"/>
    <property type="match status" value="1"/>
</dbReference>
<dbReference type="InterPro" id="IPR001009">
    <property type="entry name" value="PA/PA-X"/>
</dbReference>
<dbReference type="InterPro" id="IPR038372">
    <property type="entry name" value="PA/PA-X_sf"/>
</dbReference>
<dbReference type="Pfam" id="PF00603">
    <property type="entry name" value="Flu_PA"/>
    <property type="match status" value="1"/>
</dbReference>
<feature type="chain" id="PRO_0000419386" description="Protein PA-X">
    <location>
        <begin position="1"/>
        <end position="252"/>
    </location>
</feature>
<feature type="active site" evidence="2">
    <location>
        <position position="80"/>
    </location>
</feature>
<feature type="active site" evidence="2">
    <location>
        <position position="108"/>
    </location>
</feature>
<feature type="site" description="Important for efficient shutoff activity" evidence="5">
    <location>
        <position position="28"/>
    </location>
</feature>
<feature type="site" description="Important for efficient shutoff activity" evidence="5">
    <location>
        <position position="65"/>
    </location>
</feature>
<feature type="site" description="Important for efficient shutoff activity and nuclear localization" evidence="4">
    <location>
        <position position="195"/>
    </location>
</feature>
<feature type="site" description="Important for efficient shutoff activity and nuclear localization" evidence="4">
    <location>
        <position position="198"/>
    </location>
</feature>
<feature type="site" description="Important for efficient shutoff activity and nuclear localization" evidence="4">
    <location>
        <position position="199"/>
    </location>
</feature>
<feature type="site" description="Important for efficient shutoff activity" evidence="3">
    <location>
        <position position="202"/>
    </location>
</feature>
<feature type="site" description="Important for efficient shutoff activity" evidence="3">
    <location>
        <position position="203"/>
    </location>
</feature>
<feature type="site" description="Important for efficient shutoff activity" evidence="3">
    <location>
        <position position="206"/>
    </location>
</feature>
<organism>
    <name type="scientific">Influenza A virus (strain A/Korea/426/1968 H2N2)</name>
    <dbReference type="NCBI Taxonomy" id="488241"/>
    <lineage>
        <taxon>Viruses</taxon>
        <taxon>Riboviria</taxon>
        <taxon>Orthornavirae</taxon>
        <taxon>Negarnaviricota</taxon>
        <taxon>Polyploviricotina</taxon>
        <taxon>Insthoviricetes</taxon>
        <taxon>Articulavirales</taxon>
        <taxon>Orthomyxoviridae</taxon>
        <taxon>Alphainfluenzavirus</taxon>
        <taxon>Alphainfluenzavirus influenzae</taxon>
        <taxon>Influenza A virus</taxon>
    </lineage>
</organism>
<proteinExistence type="inferred from homology"/>
<protein>
    <recommendedName>
        <fullName>Protein PA-X</fullName>
    </recommendedName>
</protein>
<evidence type="ECO:0000250" key="1">
    <source>
        <dbReference type="UniProtKB" id="P0CK64"/>
    </source>
</evidence>
<evidence type="ECO:0000250" key="2">
    <source>
        <dbReference type="UniProtKB" id="P0CK68"/>
    </source>
</evidence>
<evidence type="ECO:0000250" key="3">
    <source>
        <dbReference type="UniProtKB" id="P0DJW8"/>
    </source>
</evidence>
<evidence type="ECO:0000250" key="4">
    <source>
        <dbReference type="UniProtKB" id="P0DXO5"/>
    </source>
</evidence>
<evidence type="ECO:0000250" key="5">
    <source>
        <dbReference type="UniProtKB" id="P0DXO6"/>
    </source>
</evidence>
<evidence type="ECO:0000305" key="6"/>
<keyword id="KW-1132">Decay of host mRNAs by virus</keyword>
<keyword id="KW-1262">Eukaryotic host gene expression shutoff by virus</keyword>
<keyword id="KW-1035">Host cytoplasm</keyword>
<keyword id="KW-1190">Host gene expression shutoff by virus</keyword>
<keyword id="KW-1192">Host mRNA suppression by virus</keyword>
<keyword id="KW-1048">Host nucleus</keyword>
<keyword id="KW-0945">Host-virus interaction</keyword>
<keyword id="KW-0688">Ribosomal frameshifting</keyword>
<organismHost>
    <name type="scientific">Aves</name>
    <dbReference type="NCBI Taxonomy" id="8782"/>
</organismHost>
<organismHost>
    <name type="scientific">Homo sapiens</name>
    <name type="common">Human</name>
    <dbReference type="NCBI Taxonomy" id="9606"/>
</organismHost>
<sequence>MEDFVRQCFNPMIVELAEKAMKEYGEDLKIETNKFAAICTHLEVCFMYSDFHFINEQGESIMVELDDPNALLKHRFEIIEGRDRTMAWTVVNSICNTTGAEKPKFLPDLYDYKENRFIEIGVTRREVHIYYLEKANKIKSENTHIHIFSFTGEEMATKADYTLDEESRARIKTRLFTIRQEMANRGLWDSFVSPKEAKKQLKKDLKSQGQCAGLPTKVSRRTSPALRILEPMWMDSNRTATLRASFLKCPKK</sequence>
<reference key="1">
    <citation type="journal article" date="1989" name="Virology">
        <title>Evolutionary pathways of the PA genes of influenza A viruses.</title>
        <authorList>
            <person name="Okazaki K."/>
            <person name="Kawaoka Y."/>
            <person name="Webster R.G."/>
        </authorList>
    </citation>
    <scope>NUCLEOTIDE SEQUENCE [GENOMIC RNA]</scope>
</reference>
<name>PAX_I68A5</name>
<comment type="function">
    <text evidence="1 4">Plays a major role in the shutoff of the host protein expression by cleaving mRNAs probably via an endonuclease activity. This host shutoff allows the virus to escape from the host antiviral response (By similarity). Hijacks host RNA splicing machinery to selectively target host RNAs containing introns for destruction. This may explain the preferential degradation of RNAs that have undergone co- or post-transcriptional processing (By similarity).</text>
</comment>
<comment type="subcellular location">
    <subcellularLocation>
        <location evidence="4">Host cytoplasm</location>
    </subcellularLocation>
    <subcellularLocation>
        <location evidence="4">Host nucleus</location>
    </subcellularLocation>
</comment>
<comment type="alternative products">
    <event type="ribosomal frameshifting"/>
    <isoform>
        <id>P0DJS3-1</id>
        <name>PA-X</name>
        <sequence type="displayed"/>
    </isoform>
    <isoform>
        <id>P13170-1</id>
        <name>PA</name>
        <sequence type="external"/>
    </isoform>
</comment>
<comment type="domain">
    <text evidence="1 4">The probable endonuclease active site in the N-terminus and the basic amino acid cluster in the C-terminus are important for the shutoff activity. The C-terminus acts as a nuclear localization signal (By similarity). The C-terminus is recruited to host protein complexes involved in nuclear Pol II RNA processing (By similarity).</text>
</comment>
<comment type="similarity">
    <text evidence="6">Belongs to the influenza viruses PA-X family.</text>
</comment>
<accession>P0DJS3</accession>